<comment type="function">
    <text>FABPs are thought to play a role in the intracellular transport of long-chain fatty acids and their acyl-CoA esters.</text>
</comment>
<comment type="subcellular location">
    <subcellularLocation>
        <location>Cytoplasm</location>
    </subcellularLocation>
</comment>
<comment type="domain">
    <text evidence="1">Forms a beta-barrel structure that accommodates the hydrophobic ligand in its interior.</text>
</comment>
<comment type="similarity">
    <text evidence="7">Belongs to the calycin superfamily. Fatty-acid binding protein (FABP) family.</text>
</comment>
<sequence>MVDAFAGTWKLVDSKNFDDYMKSIGVGFATRQVANMTKPTTIIEVNGDTIIIKTQSTFKSTEISFKLGVEFDETTADDRKVKSIVTLDGGKLVHLQKWNGQETTLVRELVDGKLILTLTHGSAVCTRTYEKEA</sequence>
<reference key="1">
    <citation type="journal article" date="1997" name="Mamm. Genome">
        <title>Characterization, chromosomal localization, and genetic variation of the porcine heart fatty acid-binding protein gene.</title>
        <authorList>
            <person name="Gerbens F.N.A."/>
            <person name="Rettenberger G."/>
            <person name="Lenstra J.A."/>
            <person name="Veerkamp J.H."/>
            <person name="te Pas M.F.W."/>
        </authorList>
    </citation>
    <scope>NUCLEOTIDE SEQUENCE [GENOMIC DNA]</scope>
    <source>
        <tissue>Blood</tissue>
    </source>
</reference>
<reference key="2">
    <citation type="submission" date="2001-10" db="EMBL/GenBank/DDBJ databases">
        <title>Identification of two H-FABP isoforms and various SNPs in the H-FABP encoding gene of the pig.</title>
        <authorList>
            <person name="Gerbens F.N.A."/>
        </authorList>
    </citation>
    <scope>NUCLEOTIDE SEQUENCE [MRNA]</scope>
    <scope>VARIANT THR-51</scope>
</reference>
<reference key="3">
    <citation type="submission" date="2007-05" db="EMBL/GenBank/DDBJ databases">
        <title>H-FABP mRNA expression in different tissues of Tibetan pig.</title>
        <authorList>
            <person name="Huang H."/>
            <person name="Shuai S.R."/>
        </authorList>
    </citation>
    <scope>NUCLEOTIDE SEQUENCE [MRNA]</scope>
    <scope>VARIANT THR-51</scope>
    <source>
        <tissue>Longissimus muscle</tissue>
    </source>
</reference>
<proteinExistence type="evidence at transcript level"/>
<dbReference type="EMBL" id="X98558">
    <property type="protein sequence ID" value="CAA67168.1"/>
    <property type="molecule type" value="Genomic_DNA"/>
</dbReference>
<dbReference type="EMBL" id="AJ416019">
    <property type="protein sequence ID" value="CAC95165.1"/>
    <property type="molecule type" value="mRNA"/>
</dbReference>
<dbReference type="EMBL" id="EF619344">
    <property type="protein sequence ID" value="ABR12603.1"/>
    <property type="molecule type" value="mRNA"/>
</dbReference>
<dbReference type="EMBL" id="EF622095">
    <property type="protein sequence ID" value="ABR10917.1"/>
    <property type="molecule type" value="mRNA"/>
</dbReference>
<dbReference type="RefSeq" id="NP_001093401.1">
    <property type="nucleotide sequence ID" value="NM_001099931.1"/>
</dbReference>
<dbReference type="SMR" id="O02772"/>
<dbReference type="FunCoup" id="O02772">
    <property type="interactions" value="584"/>
</dbReference>
<dbReference type="STRING" id="9823.ENSSSCP00000040253"/>
<dbReference type="PaxDb" id="9823-ENSSSCP00000003848"/>
<dbReference type="PeptideAtlas" id="O02772"/>
<dbReference type="Ensembl" id="ENSSSCT00000044750.2">
    <property type="protein sequence ID" value="ENSSSCP00000040253.1"/>
    <property type="gene ID" value="ENSSSCG00000036883.2"/>
</dbReference>
<dbReference type="Ensembl" id="ENSSSCT00025078975.1">
    <property type="protein sequence ID" value="ENSSSCP00025034285.1"/>
    <property type="gene ID" value="ENSSSCG00025057693.1"/>
</dbReference>
<dbReference type="Ensembl" id="ENSSSCT00045065418.1">
    <property type="protein sequence ID" value="ENSSSCP00045046292.1"/>
    <property type="gene ID" value="ENSSSCG00045037845.1"/>
</dbReference>
<dbReference type="Ensembl" id="ENSSSCT00055001748.1">
    <property type="protein sequence ID" value="ENSSSCP00055001318.1"/>
    <property type="gene ID" value="ENSSSCG00055000982.1"/>
</dbReference>
<dbReference type="Ensembl" id="ENSSSCT00070055544.1">
    <property type="protein sequence ID" value="ENSSSCP00070047166.1"/>
    <property type="gene ID" value="ENSSSCG00070027693.1"/>
</dbReference>
<dbReference type="Ensembl" id="ENSSSCT00105058064">
    <property type="protein sequence ID" value="ENSSSCP00105040997"/>
    <property type="gene ID" value="ENSSSCG00105030580"/>
</dbReference>
<dbReference type="Ensembl" id="ENSSSCT00110020192">
    <property type="protein sequence ID" value="ENSSSCP00110013643"/>
    <property type="gene ID" value="ENSSSCG00110010529"/>
</dbReference>
<dbReference type="Ensembl" id="ENSSSCT00115031889">
    <property type="protein sequence ID" value="ENSSSCP00115030321"/>
    <property type="gene ID" value="ENSSSCG00115018012"/>
</dbReference>
<dbReference type="GeneID" id="399532"/>
<dbReference type="KEGG" id="ssc:399532"/>
<dbReference type="CTD" id="2170"/>
<dbReference type="eggNOG" id="KOG4015">
    <property type="taxonomic scope" value="Eukaryota"/>
</dbReference>
<dbReference type="GeneTree" id="ENSGT00940000155104"/>
<dbReference type="InParanoid" id="O02772"/>
<dbReference type="OMA" id="NTEINCK"/>
<dbReference type="OrthoDB" id="354351at2759"/>
<dbReference type="Reactome" id="R-SSC-163560">
    <property type="pathway name" value="Triglyceride catabolism"/>
</dbReference>
<dbReference type="Proteomes" id="UP000008227">
    <property type="component" value="Chromosome 6"/>
</dbReference>
<dbReference type="Proteomes" id="UP000314985">
    <property type="component" value="Chromosome 6"/>
</dbReference>
<dbReference type="Proteomes" id="UP000694570">
    <property type="component" value="Unplaced"/>
</dbReference>
<dbReference type="Proteomes" id="UP000694571">
    <property type="component" value="Unplaced"/>
</dbReference>
<dbReference type="Proteomes" id="UP000694720">
    <property type="component" value="Unplaced"/>
</dbReference>
<dbReference type="Proteomes" id="UP000694722">
    <property type="component" value="Unplaced"/>
</dbReference>
<dbReference type="Proteomes" id="UP000694723">
    <property type="component" value="Unplaced"/>
</dbReference>
<dbReference type="Proteomes" id="UP000694724">
    <property type="component" value="Unplaced"/>
</dbReference>
<dbReference type="Proteomes" id="UP000694725">
    <property type="component" value="Unplaced"/>
</dbReference>
<dbReference type="Proteomes" id="UP000694726">
    <property type="component" value="Unplaced"/>
</dbReference>
<dbReference type="Proteomes" id="UP000694727">
    <property type="component" value="Unplaced"/>
</dbReference>
<dbReference type="Proteomes" id="UP000694728">
    <property type="component" value="Unplaced"/>
</dbReference>
<dbReference type="Bgee" id="ENSSSCG00000036883">
    <property type="expression patterns" value="Expressed in psoas major muscle and 41 other cell types or tissues"/>
</dbReference>
<dbReference type="ExpressionAtlas" id="O02772">
    <property type="expression patterns" value="baseline and differential"/>
</dbReference>
<dbReference type="GO" id="GO:0005829">
    <property type="term" value="C:cytosol"/>
    <property type="evidence" value="ECO:0000318"/>
    <property type="project" value="GO_Central"/>
</dbReference>
<dbReference type="GO" id="GO:0005634">
    <property type="term" value="C:nucleus"/>
    <property type="evidence" value="ECO:0000318"/>
    <property type="project" value="GO_Central"/>
</dbReference>
<dbReference type="GO" id="GO:0036041">
    <property type="term" value="F:long-chain fatty acid binding"/>
    <property type="evidence" value="ECO:0000318"/>
    <property type="project" value="GO_Central"/>
</dbReference>
<dbReference type="GO" id="GO:0015909">
    <property type="term" value="P:long-chain fatty acid transport"/>
    <property type="evidence" value="ECO:0000318"/>
    <property type="project" value="GO_Central"/>
</dbReference>
<dbReference type="CDD" id="cd19466">
    <property type="entry name" value="FABP3"/>
    <property type="match status" value="1"/>
</dbReference>
<dbReference type="FunFam" id="2.40.128.20:FF:000001">
    <property type="entry name" value="Fatty acid-binding protein, adipocyte"/>
    <property type="match status" value="1"/>
</dbReference>
<dbReference type="Gene3D" id="2.40.128.20">
    <property type="match status" value="1"/>
</dbReference>
<dbReference type="InterPro" id="IPR012674">
    <property type="entry name" value="Calycin"/>
</dbReference>
<dbReference type="InterPro" id="IPR000463">
    <property type="entry name" value="Fatty_acid-bd"/>
</dbReference>
<dbReference type="InterPro" id="IPR031259">
    <property type="entry name" value="ILBP"/>
</dbReference>
<dbReference type="InterPro" id="IPR000566">
    <property type="entry name" value="Lipocln_cytosolic_FA-bd_dom"/>
</dbReference>
<dbReference type="PANTHER" id="PTHR11955">
    <property type="entry name" value="FATTY ACID BINDING PROTEIN"/>
    <property type="match status" value="1"/>
</dbReference>
<dbReference type="Pfam" id="PF00061">
    <property type="entry name" value="Lipocalin"/>
    <property type="match status" value="1"/>
</dbReference>
<dbReference type="PRINTS" id="PR00178">
    <property type="entry name" value="FATTYACIDBP"/>
</dbReference>
<dbReference type="SUPFAM" id="SSF50814">
    <property type="entry name" value="Lipocalins"/>
    <property type="match status" value="1"/>
</dbReference>
<dbReference type="PROSITE" id="PS00214">
    <property type="entry name" value="FABP"/>
    <property type="match status" value="1"/>
</dbReference>
<feature type="initiator methionine" description="Removed" evidence="4">
    <location>
        <position position="1"/>
    </location>
</feature>
<feature type="chain" id="PRO_0000067324" description="Fatty acid-binding protein, heart">
    <location>
        <begin position="2"/>
        <end position="133"/>
    </location>
</feature>
<feature type="binding site" evidence="2">
    <location>
        <begin position="127"/>
        <end position="129"/>
    </location>
    <ligand>
        <name>(9Z)-octadecenoate</name>
        <dbReference type="ChEBI" id="CHEBI:30823"/>
    </ligand>
</feature>
<feature type="binding site" evidence="2">
    <location>
        <begin position="127"/>
        <end position="129"/>
    </location>
    <ligand>
        <name>hexadecanoate</name>
        <dbReference type="ChEBI" id="CHEBI:7896"/>
    </ligand>
</feature>
<feature type="binding site" evidence="2">
    <location>
        <begin position="127"/>
        <end position="129"/>
    </location>
    <ligand>
        <name>octadecanoate</name>
        <dbReference type="ChEBI" id="CHEBI:25629"/>
    </ligand>
</feature>
<feature type="modified residue" description="N-acetylvaline" evidence="4">
    <location>
        <position position="2"/>
    </location>
</feature>
<feature type="modified residue" description="Phosphothreonine" evidence="3">
    <location>
        <position position="8"/>
    </location>
</feature>
<feature type="modified residue" description="Phosphotyrosine; by Tyr-kinases" evidence="3">
    <location>
        <position position="20"/>
    </location>
</feature>
<feature type="modified residue" description="Phosphoserine" evidence="3">
    <location>
        <position position="23"/>
    </location>
</feature>
<feature type="modified residue" description="Phosphothreonine" evidence="3">
    <location>
        <position position="30"/>
    </location>
</feature>
<feature type="modified residue" description="Phosphoserine" evidence="3">
    <location>
        <position position="83"/>
    </location>
</feature>
<feature type="sequence variant" evidence="5 6">
    <original>I</original>
    <variation>T</variation>
    <location>
        <position position="51"/>
    </location>
</feature>
<protein>
    <recommendedName>
        <fullName>Fatty acid-binding protein, heart</fullName>
    </recommendedName>
    <alternativeName>
        <fullName>Fatty acid-binding protein 3</fullName>
    </alternativeName>
    <alternativeName>
        <fullName>Heart-type fatty acid-binding protein</fullName>
        <shortName>H-FABP</shortName>
    </alternativeName>
</protein>
<accession>O02772</accession>
<accession>A6N7Z0</accession>
<accession>A6N8I2</accession>
<keyword id="KW-0007">Acetylation</keyword>
<keyword id="KW-0963">Cytoplasm</keyword>
<keyword id="KW-0446">Lipid-binding</keyword>
<keyword id="KW-0597">Phosphoprotein</keyword>
<keyword id="KW-1185">Reference proteome</keyword>
<keyword id="KW-0813">Transport</keyword>
<gene>
    <name type="primary">FABP3</name>
</gene>
<organism>
    <name type="scientific">Sus scrofa</name>
    <name type="common">Pig</name>
    <dbReference type="NCBI Taxonomy" id="9823"/>
    <lineage>
        <taxon>Eukaryota</taxon>
        <taxon>Metazoa</taxon>
        <taxon>Chordata</taxon>
        <taxon>Craniata</taxon>
        <taxon>Vertebrata</taxon>
        <taxon>Euteleostomi</taxon>
        <taxon>Mammalia</taxon>
        <taxon>Eutheria</taxon>
        <taxon>Laurasiatheria</taxon>
        <taxon>Artiodactyla</taxon>
        <taxon>Suina</taxon>
        <taxon>Suidae</taxon>
        <taxon>Sus</taxon>
    </lineage>
</organism>
<name>FABPH_PIG</name>
<evidence type="ECO:0000250" key="1"/>
<evidence type="ECO:0000250" key="2">
    <source>
        <dbReference type="UniProtKB" id="P05413"/>
    </source>
</evidence>
<evidence type="ECO:0000250" key="3">
    <source>
        <dbReference type="UniProtKB" id="P07483"/>
    </source>
</evidence>
<evidence type="ECO:0000250" key="4">
    <source>
        <dbReference type="UniProtKB" id="P10790"/>
    </source>
</evidence>
<evidence type="ECO:0000269" key="5">
    <source ref="2"/>
</evidence>
<evidence type="ECO:0000269" key="6">
    <source ref="3"/>
</evidence>
<evidence type="ECO:0000305" key="7"/>